<proteinExistence type="inferred from homology"/>
<evidence type="ECO:0000255" key="1">
    <source>
        <dbReference type="HAMAP-Rule" id="MF_00203"/>
    </source>
</evidence>
<evidence type="ECO:0000256" key="2">
    <source>
        <dbReference type="SAM" id="MobiDB-lite"/>
    </source>
</evidence>
<dbReference type="EMBL" id="CP000473">
    <property type="protein sequence ID" value="ABJ87566.1"/>
    <property type="molecule type" value="Genomic_DNA"/>
</dbReference>
<dbReference type="SMR" id="Q01S04"/>
<dbReference type="FunCoup" id="Q01S04">
    <property type="interactions" value="263"/>
</dbReference>
<dbReference type="STRING" id="234267.Acid_6644"/>
<dbReference type="KEGG" id="sus:Acid_6644"/>
<dbReference type="eggNOG" id="COG0322">
    <property type="taxonomic scope" value="Bacteria"/>
</dbReference>
<dbReference type="HOGENOM" id="CLU_014841_3_2_0"/>
<dbReference type="InParanoid" id="Q01S04"/>
<dbReference type="OrthoDB" id="9804933at2"/>
<dbReference type="GO" id="GO:0005737">
    <property type="term" value="C:cytoplasm"/>
    <property type="evidence" value="ECO:0007669"/>
    <property type="project" value="UniProtKB-SubCell"/>
</dbReference>
<dbReference type="GO" id="GO:0009380">
    <property type="term" value="C:excinuclease repair complex"/>
    <property type="evidence" value="ECO:0007669"/>
    <property type="project" value="InterPro"/>
</dbReference>
<dbReference type="GO" id="GO:0003677">
    <property type="term" value="F:DNA binding"/>
    <property type="evidence" value="ECO:0007669"/>
    <property type="project" value="UniProtKB-UniRule"/>
</dbReference>
<dbReference type="GO" id="GO:0009381">
    <property type="term" value="F:excinuclease ABC activity"/>
    <property type="evidence" value="ECO:0007669"/>
    <property type="project" value="UniProtKB-UniRule"/>
</dbReference>
<dbReference type="GO" id="GO:0006289">
    <property type="term" value="P:nucleotide-excision repair"/>
    <property type="evidence" value="ECO:0007669"/>
    <property type="project" value="UniProtKB-UniRule"/>
</dbReference>
<dbReference type="GO" id="GO:0009432">
    <property type="term" value="P:SOS response"/>
    <property type="evidence" value="ECO:0007669"/>
    <property type="project" value="UniProtKB-UniRule"/>
</dbReference>
<dbReference type="CDD" id="cd10434">
    <property type="entry name" value="GIY-YIG_UvrC_Cho"/>
    <property type="match status" value="1"/>
</dbReference>
<dbReference type="FunFam" id="3.40.1440.10:FF:000001">
    <property type="entry name" value="UvrABC system protein C"/>
    <property type="match status" value="1"/>
</dbReference>
<dbReference type="Gene3D" id="1.10.150.20">
    <property type="entry name" value="5' to 3' exonuclease, C-terminal subdomain"/>
    <property type="match status" value="1"/>
</dbReference>
<dbReference type="Gene3D" id="3.40.1440.10">
    <property type="entry name" value="GIY-YIG endonuclease"/>
    <property type="match status" value="1"/>
</dbReference>
<dbReference type="Gene3D" id="3.30.420.340">
    <property type="entry name" value="UvrC, RNAse H endonuclease domain"/>
    <property type="match status" value="1"/>
</dbReference>
<dbReference type="HAMAP" id="MF_00203">
    <property type="entry name" value="UvrC"/>
    <property type="match status" value="1"/>
</dbReference>
<dbReference type="InterPro" id="IPR000305">
    <property type="entry name" value="GIY-YIG_endonuc"/>
</dbReference>
<dbReference type="InterPro" id="IPR035901">
    <property type="entry name" value="GIY-YIG_endonuc_sf"/>
</dbReference>
<dbReference type="InterPro" id="IPR047296">
    <property type="entry name" value="GIY-YIG_UvrC_Cho"/>
</dbReference>
<dbReference type="InterPro" id="IPR010994">
    <property type="entry name" value="RuvA_2-like"/>
</dbReference>
<dbReference type="InterPro" id="IPR001943">
    <property type="entry name" value="UVR_dom"/>
</dbReference>
<dbReference type="InterPro" id="IPR036876">
    <property type="entry name" value="UVR_dom_sf"/>
</dbReference>
<dbReference type="InterPro" id="IPR050066">
    <property type="entry name" value="UvrABC_protein_C"/>
</dbReference>
<dbReference type="InterPro" id="IPR004791">
    <property type="entry name" value="UvrC"/>
</dbReference>
<dbReference type="InterPro" id="IPR001162">
    <property type="entry name" value="UvrC_RNase_H_dom"/>
</dbReference>
<dbReference type="InterPro" id="IPR038476">
    <property type="entry name" value="UvrC_RNase_H_dom_sf"/>
</dbReference>
<dbReference type="NCBIfam" id="NF001824">
    <property type="entry name" value="PRK00558.1-5"/>
    <property type="match status" value="1"/>
</dbReference>
<dbReference type="NCBIfam" id="NF011263">
    <property type="entry name" value="PRK14669.1"/>
    <property type="match status" value="1"/>
</dbReference>
<dbReference type="NCBIfam" id="TIGR00194">
    <property type="entry name" value="uvrC"/>
    <property type="match status" value="1"/>
</dbReference>
<dbReference type="PANTHER" id="PTHR30562:SF1">
    <property type="entry name" value="UVRABC SYSTEM PROTEIN C"/>
    <property type="match status" value="1"/>
</dbReference>
<dbReference type="PANTHER" id="PTHR30562">
    <property type="entry name" value="UVRC/OXIDOREDUCTASE"/>
    <property type="match status" value="1"/>
</dbReference>
<dbReference type="Pfam" id="PF01541">
    <property type="entry name" value="GIY-YIG"/>
    <property type="match status" value="1"/>
</dbReference>
<dbReference type="Pfam" id="PF14520">
    <property type="entry name" value="HHH_5"/>
    <property type="match status" value="1"/>
</dbReference>
<dbReference type="Pfam" id="PF02151">
    <property type="entry name" value="UVR"/>
    <property type="match status" value="1"/>
</dbReference>
<dbReference type="Pfam" id="PF22920">
    <property type="entry name" value="UvrC_RNaseH"/>
    <property type="match status" value="1"/>
</dbReference>
<dbReference type="Pfam" id="PF08459">
    <property type="entry name" value="UvrC_RNaseH_dom"/>
    <property type="match status" value="1"/>
</dbReference>
<dbReference type="SMART" id="SM00465">
    <property type="entry name" value="GIYc"/>
    <property type="match status" value="1"/>
</dbReference>
<dbReference type="SUPFAM" id="SSF46600">
    <property type="entry name" value="C-terminal UvrC-binding domain of UvrB"/>
    <property type="match status" value="1"/>
</dbReference>
<dbReference type="SUPFAM" id="SSF82771">
    <property type="entry name" value="GIY-YIG endonuclease"/>
    <property type="match status" value="1"/>
</dbReference>
<dbReference type="SUPFAM" id="SSF47781">
    <property type="entry name" value="RuvA domain 2-like"/>
    <property type="match status" value="1"/>
</dbReference>
<dbReference type="PROSITE" id="PS50164">
    <property type="entry name" value="GIY_YIG"/>
    <property type="match status" value="1"/>
</dbReference>
<dbReference type="PROSITE" id="PS50151">
    <property type="entry name" value="UVR"/>
    <property type="match status" value="1"/>
</dbReference>
<dbReference type="PROSITE" id="PS50165">
    <property type="entry name" value="UVRC"/>
    <property type="match status" value="1"/>
</dbReference>
<name>UVRC_SOLUE</name>
<protein>
    <recommendedName>
        <fullName evidence="1">UvrABC system protein C</fullName>
        <shortName evidence="1">Protein UvrC</shortName>
    </recommendedName>
    <alternativeName>
        <fullName evidence="1">Excinuclease ABC subunit C</fullName>
    </alternativeName>
</protein>
<organism>
    <name type="scientific">Solibacter usitatus (strain Ellin6076)</name>
    <dbReference type="NCBI Taxonomy" id="234267"/>
    <lineage>
        <taxon>Bacteria</taxon>
        <taxon>Pseudomonadati</taxon>
        <taxon>Acidobacteriota</taxon>
        <taxon>Terriglobia</taxon>
        <taxon>Bryobacterales</taxon>
        <taxon>Solibacteraceae</taxon>
        <taxon>Candidatus Solibacter</taxon>
    </lineage>
</organism>
<accession>Q01S04</accession>
<sequence length="623" mass="70748">MELRDKVGQLPFSPGVYLYKDSGGKVIYVGKAKSLRNRVRSYFSEDKLGDIKTGTLITEACDIDYILVDNEKEALALENNLIKQYKPRFNILLRDDKTYPYVKVTNEKYPRVYVTRRLRKDGAQYFGPFFPANLAHRLVHFIHRHFQVPSCKVDLTRFHPKPCLQFHIHRCLGPCVQGLTTDEAYAAAVRDVRLFLDGRHSDLARGLRARMEAASLEMRFEEAAGLRDLITTVEEIEERQKMAAAKGDDVDIFAVYAEPPLVALNIFHLRNGQIVDRRELFWEDQFEYDESLFLSSLLKQIYLDQQFVPAEIHVPVEFEDLEALEELLTEKRQRRVEIRTPQRGQKKALLGLVETNAKHSFDARFRVLKPSSRAIQEALQDALNLPDAPSRIECFDISHIQGTDKVASMVVWEDGKMKKSDYRKFIIRTVVGNDDFASMREVVTRRYSRLQEEKQPMPGLVLIDGGLGQLHAAAEALEAIGIADQPLASIAKREEIIYVFGQEDEPVVLDRFSPILHLVQSIRDEAHRFAVTFHRSLRNTRQLTSELDAIRGVGAKTVQKLLKEFGSLERVRAATETQLATVVGRAAAKRVIAHYTTVEAAPEPVASVAQSEDAAPDVPDPQA</sequence>
<comment type="function">
    <text evidence="1">The UvrABC repair system catalyzes the recognition and processing of DNA lesions. UvrC both incises the 5' and 3' sides of the lesion. The N-terminal half is responsible for the 3' incision and the C-terminal half is responsible for the 5' incision.</text>
</comment>
<comment type="subunit">
    <text evidence="1">Interacts with UvrB in an incision complex.</text>
</comment>
<comment type="subcellular location">
    <subcellularLocation>
        <location evidence="1">Cytoplasm</location>
    </subcellularLocation>
</comment>
<comment type="similarity">
    <text evidence="1">Belongs to the UvrC family.</text>
</comment>
<reference key="1">
    <citation type="journal article" date="2009" name="Appl. Environ. Microbiol.">
        <title>Three genomes from the phylum Acidobacteria provide insight into the lifestyles of these microorganisms in soils.</title>
        <authorList>
            <person name="Ward N.L."/>
            <person name="Challacombe J.F."/>
            <person name="Janssen P.H."/>
            <person name="Henrissat B."/>
            <person name="Coutinho P.M."/>
            <person name="Wu M."/>
            <person name="Xie G."/>
            <person name="Haft D.H."/>
            <person name="Sait M."/>
            <person name="Badger J."/>
            <person name="Barabote R.D."/>
            <person name="Bradley B."/>
            <person name="Brettin T.S."/>
            <person name="Brinkac L.M."/>
            <person name="Bruce D."/>
            <person name="Creasy T."/>
            <person name="Daugherty S.C."/>
            <person name="Davidsen T.M."/>
            <person name="DeBoy R.T."/>
            <person name="Detter J.C."/>
            <person name="Dodson R.J."/>
            <person name="Durkin A.S."/>
            <person name="Ganapathy A."/>
            <person name="Gwinn-Giglio M."/>
            <person name="Han C.S."/>
            <person name="Khouri H."/>
            <person name="Kiss H."/>
            <person name="Kothari S.P."/>
            <person name="Madupu R."/>
            <person name="Nelson K.E."/>
            <person name="Nelson W.C."/>
            <person name="Paulsen I."/>
            <person name="Penn K."/>
            <person name="Ren Q."/>
            <person name="Rosovitz M.J."/>
            <person name="Selengut J.D."/>
            <person name="Shrivastava S."/>
            <person name="Sullivan S.A."/>
            <person name="Tapia R."/>
            <person name="Thompson L.S."/>
            <person name="Watkins K.L."/>
            <person name="Yang Q."/>
            <person name="Yu C."/>
            <person name="Zafar N."/>
            <person name="Zhou L."/>
            <person name="Kuske C.R."/>
        </authorList>
    </citation>
    <scope>NUCLEOTIDE SEQUENCE [LARGE SCALE GENOMIC DNA]</scope>
    <source>
        <strain>Ellin6076</strain>
    </source>
</reference>
<feature type="chain" id="PRO_1000077844" description="UvrABC system protein C">
    <location>
        <begin position="1"/>
        <end position="623"/>
    </location>
</feature>
<feature type="domain" description="GIY-YIG" evidence="1">
    <location>
        <begin position="12"/>
        <end position="91"/>
    </location>
</feature>
<feature type="domain" description="UVR" evidence="1">
    <location>
        <begin position="201"/>
        <end position="236"/>
    </location>
</feature>
<feature type="region of interest" description="Disordered" evidence="2">
    <location>
        <begin position="604"/>
        <end position="623"/>
    </location>
</feature>
<gene>
    <name evidence="1" type="primary">uvrC</name>
    <name type="ordered locus">Acid_6644</name>
</gene>
<keyword id="KW-0963">Cytoplasm</keyword>
<keyword id="KW-0227">DNA damage</keyword>
<keyword id="KW-0228">DNA excision</keyword>
<keyword id="KW-0234">DNA repair</keyword>
<keyword id="KW-0267">Excision nuclease</keyword>
<keyword id="KW-0742">SOS response</keyword>